<evidence type="ECO:0000255" key="1">
    <source>
        <dbReference type="HAMAP-Rule" id="MF_00294"/>
    </source>
</evidence>
<evidence type="ECO:0000305" key="2"/>
<dbReference type="EMBL" id="CP000302">
    <property type="protein sequence ID" value="ABE53623.1"/>
    <property type="molecule type" value="Genomic_DNA"/>
</dbReference>
<dbReference type="RefSeq" id="WP_011494790.1">
    <property type="nucleotide sequence ID" value="NC_007954.1"/>
</dbReference>
<dbReference type="SMR" id="Q12SF3"/>
<dbReference type="STRING" id="318161.Sden_0328"/>
<dbReference type="KEGG" id="sdn:Sden_0328"/>
<dbReference type="eggNOG" id="COG0267">
    <property type="taxonomic scope" value="Bacteria"/>
</dbReference>
<dbReference type="HOGENOM" id="CLU_190949_1_1_6"/>
<dbReference type="OrthoDB" id="21586at2"/>
<dbReference type="Proteomes" id="UP000001982">
    <property type="component" value="Chromosome"/>
</dbReference>
<dbReference type="GO" id="GO:0022625">
    <property type="term" value="C:cytosolic large ribosomal subunit"/>
    <property type="evidence" value="ECO:0007669"/>
    <property type="project" value="TreeGrafter"/>
</dbReference>
<dbReference type="GO" id="GO:0003735">
    <property type="term" value="F:structural constituent of ribosome"/>
    <property type="evidence" value="ECO:0007669"/>
    <property type="project" value="InterPro"/>
</dbReference>
<dbReference type="GO" id="GO:0006412">
    <property type="term" value="P:translation"/>
    <property type="evidence" value="ECO:0007669"/>
    <property type="project" value="UniProtKB-UniRule"/>
</dbReference>
<dbReference type="FunFam" id="2.20.28.120:FF:000001">
    <property type="entry name" value="50S ribosomal protein L33"/>
    <property type="match status" value="1"/>
</dbReference>
<dbReference type="Gene3D" id="2.20.28.120">
    <property type="entry name" value="Ribosomal protein L33"/>
    <property type="match status" value="1"/>
</dbReference>
<dbReference type="HAMAP" id="MF_00294">
    <property type="entry name" value="Ribosomal_bL33"/>
    <property type="match status" value="1"/>
</dbReference>
<dbReference type="InterPro" id="IPR001705">
    <property type="entry name" value="Ribosomal_bL33"/>
</dbReference>
<dbReference type="InterPro" id="IPR018264">
    <property type="entry name" value="Ribosomal_bL33_CS"/>
</dbReference>
<dbReference type="InterPro" id="IPR038584">
    <property type="entry name" value="Ribosomal_bL33_sf"/>
</dbReference>
<dbReference type="InterPro" id="IPR011332">
    <property type="entry name" value="Ribosomal_zn-bd"/>
</dbReference>
<dbReference type="NCBIfam" id="NF001860">
    <property type="entry name" value="PRK00595.1"/>
    <property type="match status" value="1"/>
</dbReference>
<dbReference type="NCBIfam" id="TIGR01023">
    <property type="entry name" value="rpmG_bact"/>
    <property type="match status" value="1"/>
</dbReference>
<dbReference type="PANTHER" id="PTHR15238">
    <property type="entry name" value="54S RIBOSOMAL PROTEIN L39, MITOCHONDRIAL"/>
    <property type="match status" value="1"/>
</dbReference>
<dbReference type="PANTHER" id="PTHR15238:SF1">
    <property type="entry name" value="LARGE RIBOSOMAL SUBUNIT PROTEIN BL33M"/>
    <property type="match status" value="1"/>
</dbReference>
<dbReference type="Pfam" id="PF00471">
    <property type="entry name" value="Ribosomal_L33"/>
    <property type="match status" value="1"/>
</dbReference>
<dbReference type="SUPFAM" id="SSF57829">
    <property type="entry name" value="Zn-binding ribosomal proteins"/>
    <property type="match status" value="1"/>
</dbReference>
<dbReference type="PROSITE" id="PS00582">
    <property type="entry name" value="RIBOSOMAL_L33"/>
    <property type="match status" value="1"/>
</dbReference>
<keyword id="KW-1185">Reference proteome</keyword>
<keyword id="KW-0687">Ribonucleoprotein</keyword>
<keyword id="KW-0689">Ribosomal protein</keyword>
<comment type="similarity">
    <text evidence="1">Belongs to the bacterial ribosomal protein bL33 family.</text>
</comment>
<gene>
    <name evidence="1" type="primary">rpmG</name>
    <name type="ordered locus">Sden_0328</name>
</gene>
<name>RL33_SHEDO</name>
<accession>Q12SF3</accession>
<sequence>MAKSKGNREKIKLVSSAKTGHFYTTEKNKRNMPEKMEIKKFDPVIRQHVMYKEAKIK</sequence>
<proteinExistence type="inferred from homology"/>
<organism>
    <name type="scientific">Shewanella denitrificans (strain OS217 / ATCC BAA-1090 / DSM 15013)</name>
    <dbReference type="NCBI Taxonomy" id="318161"/>
    <lineage>
        <taxon>Bacteria</taxon>
        <taxon>Pseudomonadati</taxon>
        <taxon>Pseudomonadota</taxon>
        <taxon>Gammaproteobacteria</taxon>
        <taxon>Alteromonadales</taxon>
        <taxon>Shewanellaceae</taxon>
        <taxon>Shewanella</taxon>
    </lineage>
</organism>
<protein>
    <recommendedName>
        <fullName evidence="1">Large ribosomal subunit protein bL33</fullName>
    </recommendedName>
    <alternativeName>
        <fullName evidence="2">50S ribosomal protein L33</fullName>
    </alternativeName>
</protein>
<feature type="chain" id="PRO_0000356656" description="Large ribosomal subunit protein bL33">
    <location>
        <begin position="1"/>
        <end position="57"/>
    </location>
</feature>
<reference key="1">
    <citation type="submission" date="2006-03" db="EMBL/GenBank/DDBJ databases">
        <title>Complete sequence of Shewanella denitrificans OS217.</title>
        <authorList>
            <consortium name="US DOE Joint Genome Institute"/>
            <person name="Copeland A."/>
            <person name="Lucas S."/>
            <person name="Lapidus A."/>
            <person name="Barry K."/>
            <person name="Detter J.C."/>
            <person name="Glavina del Rio T."/>
            <person name="Hammon N."/>
            <person name="Israni S."/>
            <person name="Dalin E."/>
            <person name="Tice H."/>
            <person name="Pitluck S."/>
            <person name="Brettin T."/>
            <person name="Bruce D."/>
            <person name="Han C."/>
            <person name="Tapia R."/>
            <person name="Gilna P."/>
            <person name="Kiss H."/>
            <person name="Schmutz J."/>
            <person name="Larimer F."/>
            <person name="Land M."/>
            <person name="Hauser L."/>
            <person name="Kyrpides N."/>
            <person name="Lykidis A."/>
            <person name="Richardson P."/>
        </authorList>
    </citation>
    <scope>NUCLEOTIDE SEQUENCE [LARGE SCALE GENOMIC DNA]</scope>
    <source>
        <strain>OS217 / ATCC BAA-1090 / DSM 15013</strain>
    </source>
</reference>